<evidence type="ECO:0000255" key="1">
    <source>
        <dbReference type="HAMAP-Rule" id="MF_01849"/>
    </source>
</evidence>
<evidence type="ECO:0000255" key="2">
    <source>
        <dbReference type="PROSITE-ProRule" id="PRU01266"/>
    </source>
</evidence>
<name>RLMN_SHESM</name>
<sequence length="373" mass="41668">MSEKKINLLDLDRKAMRALFADLGEKPFRADQLMKWIYHFGVSDFEEMTNINKVLRQKLAARCEIVAPEISSYQKSADGTIKFAIHVGEGQEVETVYIPEDDRATLCVSSQVGCALECTFCSTAQQGFNRNLTVSEIVGQIWRVSHFLGFAKDTGERPITNVVMMGMGEPLLNLANVIPAMDIMLDDFGFSLSKRRVTLSTSGVVPALDKLGDALDVALAVSIHAPNDELRDILVPVNKKYPLQEFLAGIRRYIAKSNANRGRVTVEYVMLDHINDSTEQAHELAQLMKDTPCKVNLIPFNPYPGSPYGRSSNSRIDRFSKVLMEYGLTVIVRKTRGDDIDAACGQLAGDIRDRTKRLAKKRMQENQISVTMN</sequence>
<reference key="1">
    <citation type="submission" date="2006-08" db="EMBL/GenBank/DDBJ databases">
        <title>Complete sequence of Shewanella sp. MR-4.</title>
        <authorList>
            <consortium name="US DOE Joint Genome Institute"/>
            <person name="Copeland A."/>
            <person name="Lucas S."/>
            <person name="Lapidus A."/>
            <person name="Barry K."/>
            <person name="Detter J.C."/>
            <person name="Glavina del Rio T."/>
            <person name="Hammon N."/>
            <person name="Israni S."/>
            <person name="Dalin E."/>
            <person name="Tice H."/>
            <person name="Pitluck S."/>
            <person name="Kiss H."/>
            <person name="Brettin T."/>
            <person name="Bruce D."/>
            <person name="Han C."/>
            <person name="Tapia R."/>
            <person name="Gilna P."/>
            <person name="Schmutz J."/>
            <person name="Larimer F."/>
            <person name="Land M."/>
            <person name="Hauser L."/>
            <person name="Kyrpides N."/>
            <person name="Mikhailova N."/>
            <person name="Nealson K."/>
            <person name="Konstantinidis K."/>
            <person name="Klappenbach J."/>
            <person name="Tiedje J."/>
            <person name="Richardson P."/>
        </authorList>
    </citation>
    <scope>NUCLEOTIDE SEQUENCE [LARGE SCALE GENOMIC DNA]</scope>
    <source>
        <strain>MR-4</strain>
    </source>
</reference>
<organism>
    <name type="scientific">Shewanella sp. (strain MR-4)</name>
    <dbReference type="NCBI Taxonomy" id="60480"/>
    <lineage>
        <taxon>Bacteria</taxon>
        <taxon>Pseudomonadati</taxon>
        <taxon>Pseudomonadota</taxon>
        <taxon>Gammaproteobacteria</taxon>
        <taxon>Alteromonadales</taxon>
        <taxon>Shewanellaceae</taxon>
        <taxon>Shewanella</taxon>
    </lineage>
</organism>
<gene>
    <name evidence="1" type="primary">rlmN</name>
    <name type="ordered locus">Shewmr4_1225</name>
</gene>
<keyword id="KW-0004">4Fe-4S</keyword>
<keyword id="KW-0963">Cytoplasm</keyword>
<keyword id="KW-1015">Disulfide bond</keyword>
<keyword id="KW-0408">Iron</keyword>
<keyword id="KW-0411">Iron-sulfur</keyword>
<keyword id="KW-0479">Metal-binding</keyword>
<keyword id="KW-0489">Methyltransferase</keyword>
<keyword id="KW-0698">rRNA processing</keyword>
<keyword id="KW-0949">S-adenosyl-L-methionine</keyword>
<keyword id="KW-0808">Transferase</keyword>
<keyword id="KW-0819">tRNA processing</keyword>
<accession>Q0HKW2</accession>
<comment type="function">
    <text evidence="1">Specifically methylates position 2 of adenine 2503 in 23S rRNA and position 2 of adenine 37 in tRNAs. m2A2503 modification seems to play a crucial role in the proofreading step occurring at the peptidyl transferase center and thus would serve to optimize ribosomal fidelity.</text>
</comment>
<comment type="catalytic activity">
    <reaction evidence="1">
        <text>adenosine(2503) in 23S rRNA + 2 reduced [2Fe-2S]-[ferredoxin] + 2 S-adenosyl-L-methionine = 2-methyladenosine(2503) in 23S rRNA + 5'-deoxyadenosine + L-methionine + 2 oxidized [2Fe-2S]-[ferredoxin] + S-adenosyl-L-homocysteine</text>
        <dbReference type="Rhea" id="RHEA:42916"/>
        <dbReference type="Rhea" id="RHEA-COMP:10000"/>
        <dbReference type="Rhea" id="RHEA-COMP:10001"/>
        <dbReference type="Rhea" id="RHEA-COMP:10152"/>
        <dbReference type="Rhea" id="RHEA-COMP:10282"/>
        <dbReference type="ChEBI" id="CHEBI:17319"/>
        <dbReference type="ChEBI" id="CHEBI:33737"/>
        <dbReference type="ChEBI" id="CHEBI:33738"/>
        <dbReference type="ChEBI" id="CHEBI:57844"/>
        <dbReference type="ChEBI" id="CHEBI:57856"/>
        <dbReference type="ChEBI" id="CHEBI:59789"/>
        <dbReference type="ChEBI" id="CHEBI:74411"/>
        <dbReference type="ChEBI" id="CHEBI:74497"/>
        <dbReference type="EC" id="2.1.1.192"/>
    </reaction>
</comment>
<comment type="catalytic activity">
    <reaction evidence="1">
        <text>adenosine(37) in tRNA + 2 reduced [2Fe-2S]-[ferredoxin] + 2 S-adenosyl-L-methionine = 2-methyladenosine(37) in tRNA + 5'-deoxyadenosine + L-methionine + 2 oxidized [2Fe-2S]-[ferredoxin] + S-adenosyl-L-homocysteine</text>
        <dbReference type="Rhea" id="RHEA:43332"/>
        <dbReference type="Rhea" id="RHEA-COMP:10000"/>
        <dbReference type="Rhea" id="RHEA-COMP:10001"/>
        <dbReference type="Rhea" id="RHEA-COMP:10162"/>
        <dbReference type="Rhea" id="RHEA-COMP:10485"/>
        <dbReference type="ChEBI" id="CHEBI:17319"/>
        <dbReference type="ChEBI" id="CHEBI:33737"/>
        <dbReference type="ChEBI" id="CHEBI:33738"/>
        <dbReference type="ChEBI" id="CHEBI:57844"/>
        <dbReference type="ChEBI" id="CHEBI:57856"/>
        <dbReference type="ChEBI" id="CHEBI:59789"/>
        <dbReference type="ChEBI" id="CHEBI:74411"/>
        <dbReference type="ChEBI" id="CHEBI:74497"/>
        <dbReference type="EC" id="2.1.1.192"/>
    </reaction>
</comment>
<comment type="cofactor">
    <cofactor evidence="1">
        <name>[4Fe-4S] cluster</name>
        <dbReference type="ChEBI" id="CHEBI:49883"/>
    </cofactor>
    <text evidence="1">Binds 1 [4Fe-4S] cluster. The cluster is coordinated with 3 cysteines and an exchangeable S-adenosyl-L-methionine.</text>
</comment>
<comment type="subcellular location">
    <subcellularLocation>
        <location evidence="1">Cytoplasm</location>
    </subcellularLocation>
</comment>
<comment type="miscellaneous">
    <text evidence="1">Reaction proceeds by a ping-pong mechanism involving intermediate methylation of a conserved cysteine residue.</text>
</comment>
<comment type="similarity">
    <text evidence="1">Belongs to the radical SAM superfamily. RlmN family.</text>
</comment>
<dbReference type="EC" id="2.1.1.192" evidence="1"/>
<dbReference type="EMBL" id="CP000446">
    <property type="protein sequence ID" value="ABI38305.1"/>
    <property type="molecule type" value="Genomic_DNA"/>
</dbReference>
<dbReference type="RefSeq" id="WP_011622013.1">
    <property type="nucleotide sequence ID" value="NC_008321.1"/>
</dbReference>
<dbReference type="SMR" id="Q0HKW2"/>
<dbReference type="KEGG" id="she:Shewmr4_1225"/>
<dbReference type="HOGENOM" id="CLU_029101_2_0_6"/>
<dbReference type="GO" id="GO:0005737">
    <property type="term" value="C:cytoplasm"/>
    <property type="evidence" value="ECO:0007669"/>
    <property type="project" value="UniProtKB-SubCell"/>
</dbReference>
<dbReference type="GO" id="GO:0051539">
    <property type="term" value="F:4 iron, 4 sulfur cluster binding"/>
    <property type="evidence" value="ECO:0007669"/>
    <property type="project" value="UniProtKB-UniRule"/>
</dbReference>
<dbReference type="GO" id="GO:0046872">
    <property type="term" value="F:metal ion binding"/>
    <property type="evidence" value="ECO:0007669"/>
    <property type="project" value="UniProtKB-KW"/>
</dbReference>
<dbReference type="GO" id="GO:0070040">
    <property type="term" value="F:rRNA (adenine(2503)-C2-)-methyltransferase activity"/>
    <property type="evidence" value="ECO:0007669"/>
    <property type="project" value="UniProtKB-UniRule"/>
</dbReference>
<dbReference type="GO" id="GO:0019843">
    <property type="term" value="F:rRNA binding"/>
    <property type="evidence" value="ECO:0007669"/>
    <property type="project" value="UniProtKB-UniRule"/>
</dbReference>
<dbReference type="GO" id="GO:0002935">
    <property type="term" value="F:tRNA (adenine(37)-C2)-methyltransferase activity"/>
    <property type="evidence" value="ECO:0007669"/>
    <property type="project" value="UniProtKB-UniRule"/>
</dbReference>
<dbReference type="GO" id="GO:0000049">
    <property type="term" value="F:tRNA binding"/>
    <property type="evidence" value="ECO:0007669"/>
    <property type="project" value="UniProtKB-UniRule"/>
</dbReference>
<dbReference type="GO" id="GO:0070475">
    <property type="term" value="P:rRNA base methylation"/>
    <property type="evidence" value="ECO:0007669"/>
    <property type="project" value="UniProtKB-UniRule"/>
</dbReference>
<dbReference type="GO" id="GO:0030488">
    <property type="term" value="P:tRNA methylation"/>
    <property type="evidence" value="ECO:0007669"/>
    <property type="project" value="UniProtKB-UniRule"/>
</dbReference>
<dbReference type="CDD" id="cd01335">
    <property type="entry name" value="Radical_SAM"/>
    <property type="match status" value="1"/>
</dbReference>
<dbReference type="FunFam" id="1.10.150.530:FF:000003">
    <property type="entry name" value="Dual-specificity RNA methyltransferase RlmN"/>
    <property type="match status" value="1"/>
</dbReference>
<dbReference type="FunFam" id="3.20.20.70:FF:000008">
    <property type="entry name" value="Dual-specificity RNA methyltransferase RlmN"/>
    <property type="match status" value="1"/>
</dbReference>
<dbReference type="Gene3D" id="1.10.150.530">
    <property type="match status" value="1"/>
</dbReference>
<dbReference type="Gene3D" id="3.20.20.70">
    <property type="entry name" value="Aldolase class I"/>
    <property type="match status" value="1"/>
</dbReference>
<dbReference type="HAMAP" id="MF_01849">
    <property type="entry name" value="RNA_methyltr_RlmN"/>
    <property type="match status" value="1"/>
</dbReference>
<dbReference type="InterPro" id="IPR013785">
    <property type="entry name" value="Aldolase_TIM"/>
</dbReference>
<dbReference type="InterPro" id="IPR040072">
    <property type="entry name" value="Methyltransferase_A"/>
</dbReference>
<dbReference type="InterPro" id="IPR048641">
    <property type="entry name" value="RlmN_N"/>
</dbReference>
<dbReference type="InterPro" id="IPR027492">
    <property type="entry name" value="RNA_MTrfase_RlmN"/>
</dbReference>
<dbReference type="InterPro" id="IPR004383">
    <property type="entry name" value="rRNA_lsu_MTrfase_RlmN/Cfr"/>
</dbReference>
<dbReference type="InterPro" id="IPR007197">
    <property type="entry name" value="rSAM"/>
</dbReference>
<dbReference type="NCBIfam" id="NF008396">
    <property type="entry name" value="PRK11194.1"/>
    <property type="match status" value="1"/>
</dbReference>
<dbReference type="NCBIfam" id="TIGR00048">
    <property type="entry name" value="rRNA_mod_RlmN"/>
    <property type="match status" value="1"/>
</dbReference>
<dbReference type="PANTHER" id="PTHR30544">
    <property type="entry name" value="23S RRNA METHYLTRANSFERASE"/>
    <property type="match status" value="1"/>
</dbReference>
<dbReference type="PANTHER" id="PTHR30544:SF5">
    <property type="entry name" value="RADICAL SAM CORE DOMAIN-CONTAINING PROTEIN"/>
    <property type="match status" value="1"/>
</dbReference>
<dbReference type="Pfam" id="PF04055">
    <property type="entry name" value="Radical_SAM"/>
    <property type="match status" value="1"/>
</dbReference>
<dbReference type="Pfam" id="PF21016">
    <property type="entry name" value="RlmN_N"/>
    <property type="match status" value="1"/>
</dbReference>
<dbReference type="PIRSF" id="PIRSF006004">
    <property type="entry name" value="CHP00048"/>
    <property type="match status" value="1"/>
</dbReference>
<dbReference type="SFLD" id="SFLDF00275">
    <property type="entry name" value="adenosine_C2_methyltransferase"/>
    <property type="match status" value="1"/>
</dbReference>
<dbReference type="SFLD" id="SFLDG01062">
    <property type="entry name" value="methyltransferase_(Class_A)"/>
    <property type="match status" value="1"/>
</dbReference>
<dbReference type="SUPFAM" id="SSF102114">
    <property type="entry name" value="Radical SAM enzymes"/>
    <property type="match status" value="1"/>
</dbReference>
<dbReference type="PROSITE" id="PS51918">
    <property type="entry name" value="RADICAL_SAM"/>
    <property type="match status" value="1"/>
</dbReference>
<proteinExistence type="inferred from homology"/>
<protein>
    <recommendedName>
        <fullName evidence="1">Dual-specificity RNA methyltransferase RlmN</fullName>
        <ecNumber evidence="1">2.1.1.192</ecNumber>
    </recommendedName>
    <alternativeName>
        <fullName evidence="1">23S rRNA (adenine(2503)-C(2))-methyltransferase</fullName>
    </alternativeName>
    <alternativeName>
        <fullName evidence="1">23S rRNA m2A2503 methyltransferase</fullName>
    </alternativeName>
    <alternativeName>
        <fullName evidence="1">Ribosomal RNA large subunit methyltransferase N</fullName>
    </alternativeName>
    <alternativeName>
        <fullName evidence="1">tRNA (adenine(37)-C(2))-methyltransferase</fullName>
    </alternativeName>
    <alternativeName>
        <fullName evidence="1">tRNA m2A37 methyltransferase</fullName>
    </alternativeName>
</protein>
<feature type="chain" id="PRO_0000350405" description="Dual-specificity RNA methyltransferase RlmN">
    <location>
        <begin position="1"/>
        <end position="373"/>
    </location>
</feature>
<feature type="domain" description="Radical SAM core" evidence="2">
    <location>
        <begin position="100"/>
        <end position="339"/>
    </location>
</feature>
<feature type="active site" description="Proton acceptor" evidence="1">
    <location>
        <position position="94"/>
    </location>
</feature>
<feature type="active site" description="S-methylcysteine intermediate" evidence="1">
    <location>
        <position position="344"/>
    </location>
</feature>
<feature type="binding site" evidence="1">
    <location>
        <position position="114"/>
    </location>
    <ligand>
        <name>[4Fe-4S] cluster</name>
        <dbReference type="ChEBI" id="CHEBI:49883"/>
        <note>4Fe-4S-S-AdoMet</note>
    </ligand>
</feature>
<feature type="binding site" evidence="1">
    <location>
        <position position="118"/>
    </location>
    <ligand>
        <name>[4Fe-4S] cluster</name>
        <dbReference type="ChEBI" id="CHEBI:49883"/>
        <note>4Fe-4S-S-AdoMet</note>
    </ligand>
</feature>
<feature type="binding site" evidence="1">
    <location>
        <position position="121"/>
    </location>
    <ligand>
        <name>[4Fe-4S] cluster</name>
        <dbReference type="ChEBI" id="CHEBI:49883"/>
        <note>4Fe-4S-S-AdoMet</note>
    </ligand>
</feature>
<feature type="binding site" evidence="1">
    <location>
        <begin position="168"/>
        <end position="169"/>
    </location>
    <ligand>
        <name>S-adenosyl-L-methionine</name>
        <dbReference type="ChEBI" id="CHEBI:59789"/>
    </ligand>
</feature>
<feature type="binding site" evidence="1">
    <location>
        <position position="200"/>
    </location>
    <ligand>
        <name>S-adenosyl-L-methionine</name>
        <dbReference type="ChEBI" id="CHEBI:59789"/>
    </ligand>
</feature>
<feature type="binding site" evidence="1">
    <location>
        <begin position="222"/>
        <end position="224"/>
    </location>
    <ligand>
        <name>S-adenosyl-L-methionine</name>
        <dbReference type="ChEBI" id="CHEBI:59789"/>
    </ligand>
</feature>
<feature type="binding site" evidence="1">
    <location>
        <position position="301"/>
    </location>
    <ligand>
        <name>S-adenosyl-L-methionine</name>
        <dbReference type="ChEBI" id="CHEBI:59789"/>
    </ligand>
</feature>
<feature type="disulfide bond" description="(transient)" evidence="1">
    <location>
        <begin position="107"/>
        <end position="344"/>
    </location>
</feature>